<feature type="chain" id="PRO_1000082752" description="Putative pre-16S rRNA nuclease">
    <location>
        <begin position="1"/>
        <end position="154"/>
    </location>
</feature>
<name>YQGF_RICRO</name>
<comment type="function">
    <text evidence="1">Could be a nuclease involved in processing of the 5'-end of pre-16S rRNA.</text>
</comment>
<comment type="subcellular location">
    <subcellularLocation>
        <location evidence="1">Cytoplasm</location>
    </subcellularLocation>
</comment>
<comment type="similarity">
    <text evidence="1">Belongs to the YqgF nuclease family.</text>
</comment>
<organism>
    <name type="scientific">Rickettsia rickettsii (strain Iowa)</name>
    <dbReference type="NCBI Taxonomy" id="452659"/>
    <lineage>
        <taxon>Bacteria</taxon>
        <taxon>Pseudomonadati</taxon>
        <taxon>Pseudomonadota</taxon>
        <taxon>Alphaproteobacteria</taxon>
        <taxon>Rickettsiales</taxon>
        <taxon>Rickettsiaceae</taxon>
        <taxon>Rickettsieae</taxon>
        <taxon>Rickettsia</taxon>
        <taxon>spotted fever group</taxon>
    </lineage>
</organism>
<gene>
    <name type="ordered locus">RrIowa_0544</name>
</gene>
<reference key="1">
    <citation type="journal article" date="2008" name="Infect. Immun.">
        <title>Genomic comparison of virulent Rickettsia rickettsii Sheila Smith and avirulent Rickettsia rickettsii Iowa.</title>
        <authorList>
            <person name="Ellison D.W."/>
            <person name="Clark T.R."/>
            <person name="Sturdevant D.E."/>
            <person name="Virtaneva K."/>
            <person name="Porcella S.F."/>
            <person name="Hackstadt T."/>
        </authorList>
    </citation>
    <scope>NUCLEOTIDE SEQUENCE [LARGE SCALE GENOMIC DNA]</scope>
    <source>
        <strain>Iowa</strain>
    </source>
</reference>
<sequence length="154" mass="17059">MIIKNLQEFYRLLIPNAPLIAIDYGSKKLGIALSNQELSIAMPLNTITEINTKIVITVLLNIIEKYKVCGVIIGLPIDMSGAVTEQTNIVMKFAEELAKSINLPIYLQDERLTTKAANNLLKSFGVKRKDRNNNDDAVAASMILETVLDSIKNI</sequence>
<protein>
    <recommendedName>
        <fullName evidence="1">Putative pre-16S rRNA nuclease</fullName>
        <ecNumber evidence="1">3.1.-.-</ecNumber>
    </recommendedName>
</protein>
<accession>B0BX42</accession>
<evidence type="ECO:0000255" key="1">
    <source>
        <dbReference type="HAMAP-Rule" id="MF_00651"/>
    </source>
</evidence>
<keyword id="KW-0963">Cytoplasm</keyword>
<keyword id="KW-0378">Hydrolase</keyword>
<keyword id="KW-0540">Nuclease</keyword>
<keyword id="KW-0690">Ribosome biogenesis</keyword>
<dbReference type="EC" id="3.1.-.-" evidence="1"/>
<dbReference type="EMBL" id="CP000766">
    <property type="protein sequence ID" value="ABY72418.1"/>
    <property type="molecule type" value="Genomic_DNA"/>
</dbReference>
<dbReference type="SMR" id="B0BX42"/>
<dbReference type="KEGG" id="rrj:RrIowa_0544"/>
<dbReference type="eggNOG" id="COG0816">
    <property type="taxonomic scope" value="Bacteria"/>
</dbReference>
<dbReference type="HOGENOM" id="CLU_098240_2_2_5"/>
<dbReference type="Proteomes" id="UP000000796">
    <property type="component" value="Chromosome"/>
</dbReference>
<dbReference type="GO" id="GO:0005829">
    <property type="term" value="C:cytosol"/>
    <property type="evidence" value="ECO:0007669"/>
    <property type="project" value="TreeGrafter"/>
</dbReference>
<dbReference type="GO" id="GO:0004518">
    <property type="term" value="F:nuclease activity"/>
    <property type="evidence" value="ECO:0007669"/>
    <property type="project" value="UniProtKB-KW"/>
</dbReference>
<dbReference type="GO" id="GO:0000967">
    <property type="term" value="P:rRNA 5'-end processing"/>
    <property type="evidence" value="ECO:0007669"/>
    <property type="project" value="UniProtKB-UniRule"/>
</dbReference>
<dbReference type="CDD" id="cd16964">
    <property type="entry name" value="YqgF"/>
    <property type="match status" value="1"/>
</dbReference>
<dbReference type="Gene3D" id="3.30.420.140">
    <property type="entry name" value="YqgF/RNase H-like domain"/>
    <property type="match status" value="1"/>
</dbReference>
<dbReference type="HAMAP" id="MF_00651">
    <property type="entry name" value="Nuclease_YqgF"/>
    <property type="match status" value="1"/>
</dbReference>
<dbReference type="InterPro" id="IPR012337">
    <property type="entry name" value="RNaseH-like_sf"/>
</dbReference>
<dbReference type="InterPro" id="IPR005227">
    <property type="entry name" value="YqgF"/>
</dbReference>
<dbReference type="InterPro" id="IPR006641">
    <property type="entry name" value="YqgF/RNaseH-like_dom"/>
</dbReference>
<dbReference type="InterPro" id="IPR037027">
    <property type="entry name" value="YqgF/RNaseH-like_dom_sf"/>
</dbReference>
<dbReference type="NCBIfam" id="TIGR00250">
    <property type="entry name" value="RNAse_H_YqgF"/>
    <property type="match status" value="1"/>
</dbReference>
<dbReference type="PANTHER" id="PTHR33317">
    <property type="entry name" value="POLYNUCLEOTIDYL TRANSFERASE, RIBONUCLEASE H-LIKE SUPERFAMILY PROTEIN"/>
    <property type="match status" value="1"/>
</dbReference>
<dbReference type="PANTHER" id="PTHR33317:SF4">
    <property type="entry name" value="POLYNUCLEOTIDYL TRANSFERASE, RIBONUCLEASE H-LIKE SUPERFAMILY PROTEIN"/>
    <property type="match status" value="1"/>
</dbReference>
<dbReference type="Pfam" id="PF03652">
    <property type="entry name" value="RuvX"/>
    <property type="match status" value="1"/>
</dbReference>
<dbReference type="SMART" id="SM00732">
    <property type="entry name" value="YqgFc"/>
    <property type="match status" value="1"/>
</dbReference>
<dbReference type="SUPFAM" id="SSF53098">
    <property type="entry name" value="Ribonuclease H-like"/>
    <property type="match status" value="1"/>
</dbReference>
<proteinExistence type="inferred from homology"/>